<keyword id="KW-0007">Acetylation</keyword>
<keyword id="KW-0963">Cytoplasm</keyword>
<keyword id="KW-0274">FAD</keyword>
<keyword id="KW-0285">Flavoprotein</keyword>
<keyword id="KW-0521">NADP</keyword>
<keyword id="KW-0539">Nucleus</keyword>
<keyword id="KW-0560">Oxidoreductase</keyword>
<keyword id="KW-1185">Reference proteome</keyword>
<organism>
    <name type="scientific">Pongo abelii</name>
    <name type="common">Sumatran orangutan</name>
    <name type="synonym">Pongo pygmaeus abelii</name>
    <dbReference type="NCBI Taxonomy" id="9601"/>
    <lineage>
        <taxon>Eukaryota</taxon>
        <taxon>Metazoa</taxon>
        <taxon>Chordata</taxon>
        <taxon>Craniata</taxon>
        <taxon>Vertebrata</taxon>
        <taxon>Euteleostomi</taxon>
        <taxon>Mammalia</taxon>
        <taxon>Eutheria</taxon>
        <taxon>Euarchontoglires</taxon>
        <taxon>Primates</taxon>
        <taxon>Haplorrhini</taxon>
        <taxon>Catarrhini</taxon>
        <taxon>Hominidae</taxon>
        <taxon>Pongo</taxon>
    </lineage>
</organism>
<sequence>MEAARPPTTAGKFVVVGGGIAGVTCAEQLATHFPSEDILLVTASPVIKAVTNFKQISKILEEFDVEEQSSTMLEKRFPNIKVIESGVKQLKSEEHCIVTEDGNQHVYKKLCLCAGAKPKLICEGNPYVLGIRDTDSAQEFQKQLIKAKRIMIIGNGGIALELVYEIEGCEVIWAIKDKAIGNTFFDAGAAEFLTSKLIAEKSEAKIAHKRTRYTTEGRKKEARSKCKSDNVGSALGPDWHEGLNLKGTKEFSHKIHLETMCEVKKIYLQDEFRILKKKSFSFPRDHKSVTTDTEMWPVYVELTNEKIYGCDFIVSATGVTPNVEPFLHGNSFELGEDGGLKVDDHMHTSLPDVYAAGDICTTAWQLSPVWQQMRLWTQARQMGWYAAKCMAAASSGDSIDMDFSFELFAHVTKFFNYKVVLLGKYNAQGLGSDHELMLRCTKGQEYVKVVMQNGRMMGAVLIGETDLEETFENLILNQMNLSSYGEDLLDPNIDIEDYFD</sequence>
<accession>Q5REJ2</accession>
<protein>
    <recommendedName>
        <fullName>Pyridine nucleotide-disulfide oxidoreductase domain-containing protein 1</fullName>
        <ecNumber>1.8.1.-</ecNumber>
    </recommendedName>
</protein>
<evidence type="ECO:0000250" key="1">
    <source>
        <dbReference type="UniProtKB" id="O52582"/>
    </source>
</evidence>
<evidence type="ECO:0000250" key="2">
    <source>
        <dbReference type="UniProtKB" id="Q3TMV7"/>
    </source>
</evidence>
<evidence type="ECO:0000250" key="3">
    <source>
        <dbReference type="UniProtKB" id="Q6PBT5"/>
    </source>
</evidence>
<evidence type="ECO:0000250" key="4">
    <source>
        <dbReference type="UniProtKB" id="Q8WU10"/>
    </source>
</evidence>
<evidence type="ECO:0000305" key="5"/>
<comment type="function">
    <text evidence="3 4">Probable FAD-dependent oxidoreductase; involved in the cellular oxidative stress response (By similarity). Required for normal sarcomere structure and muscle fiber integrity (By similarity).</text>
</comment>
<comment type="cofactor">
    <cofactor evidence="1">
        <name>FAD</name>
        <dbReference type="ChEBI" id="CHEBI:57692"/>
    </cofactor>
    <text evidence="1">Binds 1 FAD per subunit.</text>
</comment>
<comment type="subcellular location">
    <subcellularLocation>
        <location evidence="4">Nucleus</location>
    </subcellularLocation>
    <subcellularLocation>
        <location evidence="2">Cytoplasm</location>
    </subcellularLocation>
    <subcellularLocation>
        <location evidence="4">Cytoplasm</location>
        <location evidence="4">Myofibril</location>
        <location evidence="4">Sarcomere</location>
    </subcellularLocation>
</comment>
<comment type="similarity">
    <text evidence="5">Belongs to the class-I pyridine nucleotide-disulfide oxidoreductase family. PYROXD1 subfamily.</text>
</comment>
<reference key="1">
    <citation type="submission" date="2004-11" db="EMBL/GenBank/DDBJ databases">
        <authorList>
            <consortium name="The German cDNA consortium"/>
        </authorList>
    </citation>
    <scope>NUCLEOTIDE SEQUENCE [LARGE SCALE MRNA]</scope>
    <source>
        <tissue>Heart</tissue>
    </source>
</reference>
<name>PYRD1_PONAB</name>
<gene>
    <name type="primary">PYROXD1</name>
</gene>
<proteinExistence type="evidence at transcript level"/>
<feature type="chain" id="PRO_0000327421" description="Pyridine nucleotide-disulfide oxidoreductase domain-containing protein 1">
    <location>
        <begin position="1"/>
        <end position="500"/>
    </location>
</feature>
<feature type="modified residue" description="N-acetylmethionine" evidence="4">
    <location>
        <position position="1"/>
    </location>
</feature>
<dbReference type="EC" id="1.8.1.-"/>
<dbReference type="EMBL" id="CR857536">
    <property type="protein sequence ID" value="CAH89815.1"/>
    <property type="molecule type" value="mRNA"/>
</dbReference>
<dbReference type="RefSeq" id="NP_001127199.1">
    <property type="nucleotide sequence ID" value="NM_001133727.1"/>
</dbReference>
<dbReference type="SMR" id="Q5REJ2"/>
<dbReference type="FunCoup" id="Q5REJ2">
    <property type="interactions" value="1510"/>
</dbReference>
<dbReference type="STRING" id="9601.ENSPPYP00000004969"/>
<dbReference type="GeneID" id="100174254"/>
<dbReference type="KEGG" id="pon:100174254"/>
<dbReference type="CTD" id="79912"/>
<dbReference type="eggNOG" id="KOG2755">
    <property type="taxonomic scope" value="Eukaryota"/>
</dbReference>
<dbReference type="InParanoid" id="Q5REJ2"/>
<dbReference type="OrthoDB" id="202203at2759"/>
<dbReference type="Proteomes" id="UP000001595">
    <property type="component" value="Unplaced"/>
</dbReference>
<dbReference type="GO" id="GO:0005737">
    <property type="term" value="C:cytoplasm"/>
    <property type="evidence" value="ECO:0000250"/>
    <property type="project" value="UniProtKB"/>
</dbReference>
<dbReference type="GO" id="GO:0005634">
    <property type="term" value="C:nucleus"/>
    <property type="evidence" value="ECO:0000250"/>
    <property type="project" value="UniProtKB"/>
</dbReference>
<dbReference type="GO" id="GO:0030017">
    <property type="term" value="C:sarcomere"/>
    <property type="evidence" value="ECO:0000250"/>
    <property type="project" value="UniProtKB"/>
</dbReference>
<dbReference type="GO" id="GO:0016491">
    <property type="term" value="F:oxidoreductase activity"/>
    <property type="evidence" value="ECO:0007669"/>
    <property type="project" value="UniProtKB-KW"/>
</dbReference>
<dbReference type="GO" id="GO:0034599">
    <property type="term" value="P:cellular response to oxidative stress"/>
    <property type="evidence" value="ECO:0000250"/>
    <property type="project" value="UniProtKB"/>
</dbReference>
<dbReference type="FunFam" id="3.30.390.30:FF:000009">
    <property type="entry name" value="Pyridine nucleotide-disulfide oxidoreductase domain-containing protein 1"/>
    <property type="match status" value="1"/>
</dbReference>
<dbReference type="FunFam" id="3.50.50.60:FF:000165">
    <property type="entry name" value="Pyridine nucleotide-disulfide oxidoreductase domain-containing protein 1"/>
    <property type="match status" value="1"/>
</dbReference>
<dbReference type="FunFam" id="3.50.50.60:FF:000176">
    <property type="entry name" value="Pyridine nucleotide-disulfide oxidoreductase domain-containing protein 1"/>
    <property type="match status" value="1"/>
</dbReference>
<dbReference type="FunFam" id="3.50.50.60:FF:000181">
    <property type="entry name" value="Pyridine nucleotide-disulfide oxidoreductase domain-containing protein 1"/>
    <property type="match status" value="1"/>
</dbReference>
<dbReference type="Gene3D" id="3.30.390.30">
    <property type="match status" value="1"/>
</dbReference>
<dbReference type="Gene3D" id="3.50.50.60">
    <property type="entry name" value="FAD/NAD(P)-binding domain"/>
    <property type="match status" value="3"/>
</dbReference>
<dbReference type="InterPro" id="IPR050260">
    <property type="entry name" value="FAD-bd_OxRdtase"/>
</dbReference>
<dbReference type="InterPro" id="IPR036188">
    <property type="entry name" value="FAD/NAD-bd_sf"/>
</dbReference>
<dbReference type="InterPro" id="IPR023753">
    <property type="entry name" value="FAD/NAD-binding_dom"/>
</dbReference>
<dbReference type="InterPro" id="IPR016156">
    <property type="entry name" value="FAD/NAD-linked_Rdtase_dimer_sf"/>
</dbReference>
<dbReference type="InterPro" id="IPR041575">
    <property type="entry name" value="Rubredoxin_C"/>
</dbReference>
<dbReference type="PANTHER" id="PTHR43429">
    <property type="entry name" value="PYRIDINE NUCLEOTIDE-DISULFIDE OXIDOREDUCTASE DOMAIN-CONTAINING"/>
    <property type="match status" value="1"/>
</dbReference>
<dbReference type="PANTHER" id="PTHR43429:SF2">
    <property type="entry name" value="PYRIDINE NUCLEOTIDE-DISULFIDE OXIDOREDUCTASE DOMAIN-CONTAINING PROTEIN 1"/>
    <property type="match status" value="1"/>
</dbReference>
<dbReference type="Pfam" id="PF07992">
    <property type="entry name" value="Pyr_redox_2"/>
    <property type="match status" value="2"/>
</dbReference>
<dbReference type="Pfam" id="PF18267">
    <property type="entry name" value="Rubredoxin_C"/>
    <property type="match status" value="1"/>
</dbReference>
<dbReference type="PRINTS" id="PR00368">
    <property type="entry name" value="FADPNR"/>
</dbReference>
<dbReference type="PRINTS" id="PR00411">
    <property type="entry name" value="PNDRDTASEI"/>
</dbReference>
<dbReference type="SUPFAM" id="SSF51905">
    <property type="entry name" value="FAD/NAD(P)-binding domain"/>
    <property type="match status" value="2"/>
</dbReference>